<proteinExistence type="inferred from homology"/>
<comment type="cofactor">
    <cofactor evidence="2">
        <name>Zn(2+)</name>
        <dbReference type="ChEBI" id="CHEBI:29105"/>
    </cofactor>
    <text evidence="2">Binds 1 zinc ion.</text>
</comment>
<comment type="subcellular location">
    <subcellularLocation>
        <location evidence="2">Cytoplasm</location>
    </subcellularLocation>
</comment>
<comment type="similarity">
    <text evidence="2">Belongs to the SprT family.</text>
</comment>
<accession>P60189</accession>
<accession>Q8XEU9</accession>
<dbReference type="EMBL" id="AE014613">
    <property type="protein sequence ID" value="AAO70556.1"/>
    <property type="molecule type" value="Genomic_DNA"/>
</dbReference>
<dbReference type="EMBL" id="AL513382">
    <property type="protein sequence ID" value="CAD02916.1"/>
    <property type="molecule type" value="Genomic_DNA"/>
</dbReference>
<dbReference type="RefSeq" id="NP_457484.1">
    <property type="nucleotide sequence ID" value="NC_003198.1"/>
</dbReference>
<dbReference type="RefSeq" id="WP_000856775.1">
    <property type="nucleotide sequence ID" value="NZ_WSUR01000049.1"/>
</dbReference>
<dbReference type="STRING" id="220341.gene:17587118"/>
<dbReference type="KEGG" id="stt:t3004"/>
<dbReference type="KEGG" id="sty:STY3245"/>
<dbReference type="PATRIC" id="fig|220341.7.peg.3309"/>
<dbReference type="eggNOG" id="COG3091">
    <property type="taxonomic scope" value="Bacteria"/>
</dbReference>
<dbReference type="HOGENOM" id="CLU_113336_0_1_6"/>
<dbReference type="OMA" id="QPHGEEW"/>
<dbReference type="OrthoDB" id="267364at2"/>
<dbReference type="Proteomes" id="UP000000541">
    <property type="component" value="Chromosome"/>
</dbReference>
<dbReference type="Proteomes" id="UP000002670">
    <property type="component" value="Chromosome"/>
</dbReference>
<dbReference type="GO" id="GO:0005737">
    <property type="term" value="C:cytoplasm"/>
    <property type="evidence" value="ECO:0007669"/>
    <property type="project" value="UniProtKB-SubCell"/>
</dbReference>
<dbReference type="GO" id="GO:0008270">
    <property type="term" value="F:zinc ion binding"/>
    <property type="evidence" value="ECO:0007669"/>
    <property type="project" value="UniProtKB-UniRule"/>
</dbReference>
<dbReference type="GO" id="GO:0006950">
    <property type="term" value="P:response to stress"/>
    <property type="evidence" value="ECO:0007669"/>
    <property type="project" value="UniProtKB-ARBA"/>
</dbReference>
<dbReference type="HAMAP" id="MF_00746">
    <property type="entry name" value="SprT"/>
    <property type="match status" value="1"/>
</dbReference>
<dbReference type="InterPro" id="IPR006640">
    <property type="entry name" value="SprT-like_domain"/>
</dbReference>
<dbReference type="InterPro" id="IPR035240">
    <property type="entry name" value="SprT_Zn_ribbon"/>
</dbReference>
<dbReference type="InterPro" id="IPR023483">
    <property type="entry name" value="Uncharacterised_SprT"/>
</dbReference>
<dbReference type="NCBIfam" id="NF003421">
    <property type="entry name" value="PRK04860.1"/>
    <property type="match status" value="1"/>
</dbReference>
<dbReference type="PANTHER" id="PTHR38773">
    <property type="entry name" value="PROTEIN SPRT"/>
    <property type="match status" value="1"/>
</dbReference>
<dbReference type="PANTHER" id="PTHR38773:SF1">
    <property type="entry name" value="PROTEIN SPRT"/>
    <property type="match status" value="1"/>
</dbReference>
<dbReference type="Pfam" id="PF10263">
    <property type="entry name" value="SprT-like"/>
    <property type="match status" value="1"/>
</dbReference>
<dbReference type="Pfam" id="PF17283">
    <property type="entry name" value="Zn_ribbon_SprT"/>
    <property type="match status" value="1"/>
</dbReference>
<dbReference type="SMART" id="SM00731">
    <property type="entry name" value="SprT"/>
    <property type="match status" value="1"/>
</dbReference>
<dbReference type="PROSITE" id="PS00142">
    <property type="entry name" value="ZINC_PROTEASE"/>
    <property type="match status" value="1"/>
</dbReference>
<keyword id="KW-0963">Cytoplasm</keyword>
<keyword id="KW-0479">Metal-binding</keyword>
<keyword id="KW-0862">Zinc</keyword>
<organism>
    <name type="scientific">Salmonella typhi</name>
    <dbReference type="NCBI Taxonomy" id="90370"/>
    <lineage>
        <taxon>Bacteria</taxon>
        <taxon>Pseudomonadati</taxon>
        <taxon>Pseudomonadota</taxon>
        <taxon>Gammaproteobacteria</taxon>
        <taxon>Enterobacterales</taxon>
        <taxon>Enterobacteriaceae</taxon>
        <taxon>Salmonella</taxon>
    </lineage>
</organism>
<sequence length="165" mass="19243">MKTPRLPIAIQQAVMRRLRENLAQANLKLDRHYPEPKLVYTQRGTSAGTAWLESYEIRLNPVLLLENIDTFIAEVVPHELAHLLVWKHFGRKAPHGKEWKWMMESVLGVPARRTHQFALQSVRRNTFPYHCQCQQHQLTVRRHNRVVRGEAVYRCVHCGEPLVAG</sequence>
<name>SPRT_SALTI</name>
<evidence type="ECO:0000255" key="1"/>
<evidence type="ECO:0000305" key="2"/>
<feature type="chain" id="PRO_0000213276" description="Protein SprT">
    <location>
        <begin position="1"/>
        <end position="165"/>
    </location>
</feature>
<feature type="domain" description="SprT-like">
    <location>
        <begin position="22"/>
        <end position="163"/>
    </location>
</feature>
<feature type="active site" evidence="1">
    <location>
        <position position="79"/>
    </location>
</feature>
<feature type="binding site" evidence="1">
    <location>
        <position position="78"/>
    </location>
    <ligand>
        <name>Zn(2+)</name>
        <dbReference type="ChEBI" id="CHEBI:29105"/>
    </ligand>
</feature>
<feature type="binding site" evidence="1">
    <location>
        <position position="82"/>
    </location>
    <ligand>
        <name>Zn(2+)</name>
        <dbReference type="ChEBI" id="CHEBI:29105"/>
    </ligand>
</feature>
<reference key="1">
    <citation type="journal article" date="2003" name="J. Bacteriol.">
        <title>Comparative genomics of Salmonella enterica serovar Typhi strains Ty2 and CT18.</title>
        <authorList>
            <person name="Deng W."/>
            <person name="Liou S.-R."/>
            <person name="Plunkett G. III"/>
            <person name="Mayhew G.F."/>
            <person name="Rose D.J."/>
            <person name="Burland V."/>
            <person name="Kodoyianni V."/>
            <person name="Schwartz D.C."/>
            <person name="Blattner F.R."/>
        </authorList>
    </citation>
    <scope>NUCLEOTIDE SEQUENCE [LARGE SCALE GENOMIC DNA]</scope>
    <source>
        <strain>ATCC 700931 / Ty2</strain>
    </source>
</reference>
<reference key="2">
    <citation type="journal article" date="2001" name="Nature">
        <title>Complete genome sequence of a multiple drug resistant Salmonella enterica serovar Typhi CT18.</title>
        <authorList>
            <person name="Parkhill J."/>
            <person name="Dougan G."/>
            <person name="James K.D."/>
            <person name="Thomson N.R."/>
            <person name="Pickard D."/>
            <person name="Wain J."/>
            <person name="Churcher C.M."/>
            <person name="Mungall K.L."/>
            <person name="Bentley S.D."/>
            <person name="Holden M.T.G."/>
            <person name="Sebaihia M."/>
            <person name="Baker S."/>
            <person name="Basham D."/>
            <person name="Brooks K."/>
            <person name="Chillingworth T."/>
            <person name="Connerton P."/>
            <person name="Cronin A."/>
            <person name="Davis P."/>
            <person name="Davies R.M."/>
            <person name="Dowd L."/>
            <person name="White N."/>
            <person name="Farrar J."/>
            <person name="Feltwell T."/>
            <person name="Hamlin N."/>
            <person name="Haque A."/>
            <person name="Hien T.T."/>
            <person name="Holroyd S."/>
            <person name="Jagels K."/>
            <person name="Krogh A."/>
            <person name="Larsen T.S."/>
            <person name="Leather S."/>
            <person name="Moule S."/>
            <person name="O'Gaora P."/>
            <person name="Parry C."/>
            <person name="Quail M.A."/>
            <person name="Rutherford K.M."/>
            <person name="Simmonds M."/>
            <person name="Skelton J."/>
            <person name="Stevens K."/>
            <person name="Whitehead S."/>
            <person name="Barrell B.G."/>
        </authorList>
    </citation>
    <scope>NUCLEOTIDE SEQUENCE [LARGE SCALE GENOMIC DNA]</scope>
    <source>
        <strain>CT18</strain>
    </source>
</reference>
<protein>
    <recommendedName>
        <fullName>Protein SprT</fullName>
    </recommendedName>
</protein>
<gene>
    <name type="primary">sprT</name>
    <name type="ordered locus">STY3245</name>
    <name type="ordered locus">t3004</name>
</gene>